<feature type="chain" id="PRO_0000386611" description="Dolichyl-diphosphooligosaccharide--protein glycosyltransferase subunit 4">
    <location>
        <begin position="1"/>
        <end position="40"/>
    </location>
</feature>
<feature type="topological domain" description="Lumenal" evidence="4">
    <location>
        <begin position="1"/>
        <end position="4"/>
    </location>
</feature>
<feature type="transmembrane region" description="Helical" evidence="4">
    <location>
        <begin position="5"/>
        <end position="25"/>
    </location>
</feature>
<feature type="topological domain" description="Cytoplasmic" evidence="4">
    <location>
        <begin position="26"/>
        <end position="40"/>
    </location>
</feature>
<name>OST4_DROMO</name>
<keyword id="KW-0256">Endoplasmic reticulum</keyword>
<keyword id="KW-0472">Membrane</keyword>
<keyword id="KW-1185">Reference proteome</keyword>
<keyword id="KW-0735">Signal-anchor</keyword>
<keyword id="KW-0812">Transmembrane</keyword>
<keyword id="KW-1133">Transmembrane helix</keyword>
<accession>B4KQ08</accession>
<sequence length="40" mass="4443">MITDVQLAIFSNVLGVFLFLLVVAYHYINANTGKSSIKNK</sequence>
<proteinExistence type="inferred from homology"/>
<reference evidence="6" key="1">
    <citation type="journal article" date="2007" name="Nature">
        <title>Evolution of genes and genomes on the Drosophila phylogeny.</title>
        <authorList>
            <consortium name="Drosophila 12 genomes consortium"/>
        </authorList>
    </citation>
    <scope>NUCLEOTIDE SEQUENCE [LARGE SCALE GENOMIC DNA]</scope>
    <source>
        <strain evidence="6">Tucson 15081-1352.22</strain>
    </source>
</reference>
<gene>
    <name type="ORF">GI16965</name>
</gene>
<evidence type="ECO:0000250" key="1"/>
<evidence type="ECO:0000250" key="2">
    <source>
        <dbReference type="UniProtKB" id="P0C6T2"/>
    </source>
</evidence>
<evidence type="ECO:0000250" key="3">
    <source>
        <dbReference type="UniProtKB" id="Q99380"/>
    </source>
</evidence>
<evidence type="ECO:0000255" key="4"/>
<evidence type="ECO:0000305" key="5"/>
<evidence type="ECO:0000312" key="6">
    <source>
        <dbReference type="EMBL" id="EDW08110.1"/>
    </source>
</evidence>
<dbReference type="EMBL" id="CH933808">
    <property type="protein sequence ID" value="EDW08110.1"/>
    <property type="status" value="ALT_SEQ"/>
    <property type="molecule type" value="Genomic_DNA"/>
</dbReference>
<dbReference type="SMR" id="B4KQ08"/>
<dbReference type="FunCoup" id="B4KQ08">
    <property type="interactions" value="108"/>
</dbReference>
<dbReference type="EnsemblMetazoa" id="FBtr0167690">
    <property type="protein sequence ID" value="FBpp0166182"/>
    <property type="gene ID" value="FBgn0139711"/>
</dbReference>
<dbReference type="EnsemblMetazoa" id="XM_002004139.4">
    <property type="protein sequence ID" value="XP_002004175.2"/>
    <property type="gene ID" value="LOC6578259"/>
</dbReference>
<dbReference type="GeneID" id="6578259"/>
<dbReference type="KEGG" id="dmo:Dmoj_GI16965"/>
<dbReference type="InParanoid" id="B4KQ08"/>
<dbReference type="Proteomes" id="UP000009192">
    <property type="component" value="Unassembled WGS sequence"/>
</dbReference>
<dbReference type="GO" id="GO:0008250">
    <property type="term" value="C:oligosaccharyltransferase complex"/>
    <property type="evidence" value="ECO:0000250"/>
    <property type="project" value="UniProtKB"/>
</dbReference>
<dbReference type="GO" id="GO:0006487">
    <property type="term" value="P:protein N-linked glycosylation"/>
    <property type="evidence" value="ECO:0000250"/>
    <property type="project" value="UniProtKB"/>
</dbReference>
<dbReference type="GO" id="GO:0018279">
    <property type="term" value="P:protein N-linked glycosylation via asparagine"/>
    <property type="evidence" value="ECO:0007669"/>
    <property type="project" value="TreeGrafter"/>
</dbReference>
<dbReference type="InterPro" id="IPR018943">
    <property type="entry name" value="Oligosaccaryltransferase"/>
</dbReference>
<dbReference type="InterPro" id="IPR051307">
    <property type="entry name" value="OST4"/>
</dbReference>
<dbReference type="InterPro" id="IPR036330">
    <property type="entry name" value="Ost4p_sf"/>
</dbReference>
<dbReference type="PANTHER" id="PTHR48164">
    <property type="entry name" value="DOLICHYL-DIPHOSPHOOLIGOSACCHARIDE--PROTEIN GLYCOSYLTRANSFERASE SUBUNIT 4"/>
    <property type="match status" value="1"/>
</dbReference>
<dbReference type="PANTHER" id="PTHR48164:SF1">
    <property type="entry name" value="DOLICHYL-DIPHOSPHOOLIGOSACCHARIDE--PROTEIN GLYCOSYLTRANSFERASE SUBUNIT 4"/>
    <property type="match status" value="1"/>
</dbReference>
<dbReference type="Pfam" id="PF10215">
    <property type="entry name" value="Ost4"/>
    <property type="match status" value="1"/>
</dbReference>
<dbReference type="SUPFAM" id="SSF103464">
    <property type="entry name" value="Oligosaccharyltransferase subunit ost4p"/>
    <property type="match status" value="1"/>
</dbReference>
<protein>
    <recommendedName>
        <fullName evidence="3">Dolichyl-diphosphooligosaccharide--protein glycosyltransferase subunit 4</fullName>
    </recommendedName>
</protein>
<comment type="function">
    <text evidence="2">Subunit of the oligosaccharyl transferase (OST) complex that catalyzes the initial transfer of a defined glycan (Glc(3)Man(9)GlcNAc(2) in eukaryotes) from the lipid carrier dolichol-pyrophosphate to an asparagine residue within an Asn-X-Ser/Thr consensus motif in nascent polypeptide chains, the first step in protein N-glycosylation. N-glycosylation occurs cotranslationally and the complex associates with the Sec61 complex at the channel-forming translocon complex that mediates protein translocation across the endoplasmic reticulum (ER). All subunits are required for a maximal enzyme activity.</text>
</comment>
<comment type="subunit">
    <text evidence="2">Component of the oligosaccharyltransferase (OST) complex.</text>
</comment>
<comment type="subcellular location">
    <subcellularLocation>
        <location evidence="1">Endoplasmic reticulum membrane</location>
        <topology evidence="1">Single-pass type III membrane protein</topology>
    </subcellularLocation>
</comment>
<comment type="similarity">
    <text evidence="4">Belongs to the OST4 family.</text>
</comment>
<comment type="sequence caution" evidence="5">
    <conflict type="erroneous gene model prediction">
        <sequence resource="EMBL-CDS" id="EDW08110"/>
    </conflict>
</comment>
<organism>
    <name type="scientific">Drosophila mojavensis</name>
    <name type="common">Fruit fly</name>
    <dbReference type="NCBI Taxonomy" id="7230"/>
    <lineage>
        <taxon>Eukaryota</taxon>
        <taxon>Metazoa</taxon>
        <taxon>Ecdysozoa</taxon>
        <taxon>Arthropoda</taxon>
        <taxon>Hexapoda</taxon>
        <taxon>Insecta</taxon>
        <taxon>Pterygota</taxon>
        <taxon>Neoptera</taxon>
        <taxon>Endopterygota</taxon>
        <taxon>Diptera</taxon>
        <taxon>Brachycera</taxon>
        <taxon>Muscomorpha</taxon>
        <taxon>Ephydroidea</taxon>
        <taxon>Drosophilidae</taxon>
        <taxon>Drosophila</taxon>
    </lineage>
</organism>